<reference key="1">
    <citation type="journal article" date="2008" name="PLoS Genet.">
        <title>Complete genome sequence of the N2-fixing broad host range endophyte Klebsiella pneumoniae 342 and virulence predictions verified in mice.</title>
        <authorList>
            <person name="Fouts D.E."/>
            <person name="Tyler H.L."/>
            <person name="DeBoy R.T."/>
            <person name="Daugherty S."/>
            <person name="Ren Q."/>
            <person name="Badger J.H."/>
            <person name="Durkin A.S."/>
            <person name="Huot H."/>
            <person name="Shrivastava S."/>
            <person name="Kothari S."/>
            <person name="Dodson R.J."/>
            <person name="Mohamoud Y."/>
            <person name="Khouri H."/>
            <person name="Roesch L.F.W."/>
            <person name="Krogfelt K.A."/>
            <person name="Struve C."/>
            <person name="Triplett E.W."/>
            <person name="Methe B.A."/>
        </authorList>
    </citation>
    <scope>NUCLEOTIDE SEQUENCE [LARGE SCALE GENOMIC DNA]</scope>
    <source>
        <strain>342</strain>
    </source>
</reference>
<name>RUVC_KLEP3</name>
<comment type="function">
    <text evidence="1">The RuvA-RuvB-RuvC complex processes Holliday junction (HJ) DNA during genetic recombination and DNA repair. Endonuclease that resolves HJ intermediates. Cleaves cruciform DNA by making single-stranded nicks across the HJ at symmetrical positions within the homologous arms, yielding a 5'-phosphate and a 3'-hydroxyl group; requires a central core of homology in the junction. The consensus cleavage sequence is 5'-(A/T)TT(C/G)-3'. Cleavage occurs on the 3'-side of the TT dinucleotide at the point of strand exchange. HJ branch migration catalyzed by RuvA-RuvB allows RuvC to scan DNA until it finds its consensus sequence, where it cleaves and resolves the cruciform DNA.</text>
</comment>
<comment type="catalytic activity">
    <reaction evidence="1">
        <text>Endonucleolytic cleavage at a junction such as a reciprocal single-stranded crossover between two homologous DNA duplexes (Holliday junction).</text>
        <dbReference type="EC" id="3.1.21.10"/>
    </reaction>
</comment>
<comment type="cofactor">
    <cofactor evidence="1">
        <name>Mg(2+)</name>
        <dbReference type="ChEBI" id="CHEBI:18420"/>
    </cofactor>
    <text evidence="1">Binds 2 Mg(2+) ion per subunit.</text>
</comment>
<comment type="subunit">
    <text evidence="1">Homodimer which binds Holliday junction (HJ) DNA. The HJ becomes 2-fold symmetrical on binding to RuvC with unstacked arms; it has a different conformation from HJ DNA in complex with RuvA. In the full resolvosome a probable DNA-RuvA(4)-RuvB(12)-RuvC(2) complex forms which resolves the HJ.</text>
</comment>
<comment type="subcellular location">
    <subcellularLocation>
        <location evidence="1">Cytoplasm</location>
    </subcellularLocation>
</comment>
<comment type="similarity">
    <text evidence="1">Belongs to the RuvC family.</text>
</comment>
<gene>
    <name evidence="1" type="primary">ruvC</name>
    <name type="ordered locus">KPK_1907</name>
</gene>
<accession>B5XQ03</accession>
<keyword id="KW-0963">Cytoplasm</keyword>
<keyword id="KW-0227">DNA damage</keyword>
<keyword id="KW-0233">DNA recombination</keyword>
<keyword id="KW-0234">DNA repair</keyword>
<keyword id="KW-0238">DNA-binding</keyword>
<keyword id="KW-0255">Endonuclease</keyword>
<keyword id="KW-0378">Hydrolase</keyword>
<keyword id="KW-0460">Magnesium</keyword>
<keyword id="KW-0479">Metal-binding</keyword>
<keyword id="KW-0540">Nuclease</keyword>
<protein>
    <recommendedName>
        <fullName evidence="1">Crossover junction endodeoxyribonuclease RuvC</fullName>
        <ecNumber evidence="1">3.1.21.10</ecNumber>
    </recommendedName>
    <alternativeName>
        <fullName evidence="1">Holliday junction nuclease RuvC</fullName>
    </alternativeName>
    <alternativeName>
        <fullName evidence="1">Holliday junction resolvase RuvC</fullName>
    </alternativeName>
</protein>
<proteinExistence type="inferred from homology"/>
<feature type="chain" id="PRO_1000090535" description="Crossover junction endodeoxyribonuclease RuvC">
    <location>
        <begin position="1"/>
        <end position="173"/>
    </location>
</feature>
<feature type="active site" evidence="1">
    <location>
        <position position="8"/>
    </location>
</feature>
<feature type="active site" evidence="1">
    <location>
        <position position="67"/>
    </location>
</feature>
<feature type="active site" evidence="1">
    <location>
        <position position="139"/>
    </location>
</feature>
<feature type="binding site" evidence="1">
    <location>
        <position position="8"/>
    </location>
    <ligand>
        <name>Mg(2+)</name>
        <dbReference type="ChEBI" id="CHEBI:18420"/>
        <label>1</label>
    </ligand>
</feature>
<feature type="binding site" evidence="1">
    <location>
        <position position="67"/>
    </location>
    <ligand>
        <name>Mg(2+)</name>
        <dbReference type="ChEBI" id="CHEBI:18420"/>
        <label>2</label>
    </ligand>
</feature>
<feature type="binding site" evidence="1">
    <location>
        <position position="139"/>
    </location>
    <ligand>
        <name>Mg(2+)</name>
        <dbReference type="ChEBI" id="CHEBI:18420"/>
        <label>1</label>
    </ligand>
</feature>
<dbReference type="EC" id="3.1.21.10" evidence="1"/>
<dbReference type="EMBL" id="CP000964">
    <property type="protein sequence ID" value="ACI08238.1"/>
    <property type="molecule type" value="Genomic_DNA"/>
</dbReference>
<dbReference type="SMR" id="B5XQ03"/>
<dbReference type="KEGG" id="kpe:KPK_1907"/>
<dbReference type="HOGENOM" id="CLU_091257_2_1_6"/>
<dbReference type="Proteomes" id="UP000001734">
    <property type="component" value="Chromosome"/>
</dbReference>
<dbReference type="GO" id="GO:0005737">
    <property type="term" value="C:cytoplasm"/>
    <property type="evidence" value="ECO:0007669"/>
    <property type="project" value="UniProtKB-SubCell"/>
</dbReference>
<dbReference type="GO" id="GO:0048476">
    <property type="term" value="C:Holliday junction resolvase complex"/>
    <property type="evidence" value="ECO:0007669"/>
    <property type="project" value="UniProtKB-UniRule"/>
</dbReference>
<dbReference type="GO" id="GO:0008821">
    <property type="term" value="F:crossover junction DNA endonuclease activity"/>
    <property type="evidence" value="ECO:0007669"/>
    <property type="project" value="UniProtKB-UniRule"/>
</dbReference>
<dbReference type="GO" id="GO:0003677">
    <property type="term" value="F:DNA binding"/>
    <property type="evidence" value="ECO:0007669"/>
    <property type="project" value="UniProtKB-KW"/>
</dbReference>
<dbReference type="GO" id="GO:0000287">
    <property type="term" value="F:magnesium ion binding"/>
    <property type="evidence" value="ECO:0007669"/>
    <property type="project" value="UniProtKB-UniRule"/>
</dbReference>
<dbReference type="GO" id="GO:0006310">
    <property type="term" value="P:DNA recombination"/>
    <property type="evidence" value="ECO:0007669"/>
    <property type="project" value="UniProtKB-UniRule"/>
</dbReference>
<dbReference type="GO" id="GO:0006281">
    <property type="term" value="P:DNA repair"/>
    <property type="evidence" value="ECO:0007669"/>
    <property type="project" value="UniProtKB-UniRule"/>
</dbReference>
<dbReference type="CDD" id="cd16962">
    <property type="entry name" value="RuvC"/>
    <property type="match status" value="1"/>
</dbReference>
<dbReference type="FunFam" id="3.30.420.10:FF:000002">
    <property type="entry name" value="Crossover junction endodeoxyribonuclease RuvC"/>
    <property type="match status" value="1"/>
</dbReference>
<dbReference type="Gene3D" id="3.30.420.10">
    <property type="entry name" value="Ribonuclease H-like superfamily/Ribonuclease H"/>
    <property type="match status" value="1"/>
</dbReference>
<dbReference type="HAMAP" id="MF_00034">
    <property type="entry name" value="RuvC"/>
    <property type="match status" value="1"/>
</dbReference>
<dbReference type="InterPro" id="IPR012337">
    <property type="entry name" value="RNaseH-like_sf"/>
</dbReference>
<dbReference type="InterPro" id="IPR036397">
    <property type="entry name" value="RNaseH_sf"/>
</dbReference>
<dbReference type="InterPro" id="IPR020563">
    <property type="entry name" value="X-over_junc_endoDNase_Mg_BS"/>
</dbReference>
<dbReference type="InterPro" id="IPR002176">
    <property type="entry name" value="X-over_junc_endoDNase_RuvC"/>
</dbReference>
<dbReference type="NCBIfam" id="NF000711">
    <property type="entry name" value="PRK00039.2-1"/>
    <property type="match status" value="1"/>
</dbReference>
<dbReference type="NCBIfam" id="TIGR00228">
    <property type="entry name" value="ruvC"/>
    <property type="match status" value="1"/>
</dbReference>
<dbReference type="PANTHER" id="PTHR30194">
    <property type="entry name" value="CROSSOVER JUNCTION ENDODEOXYRIBONUCLEASE RUVC"/>
    <property type="match status" value="1"/>
</dbReference>
<dbReference type="PANTHER" id="PTHR30194:SF3">
    <property type="entry name" value="CROSSOVER JUNCTION ENDODEOXYRIBONUCLEASE RUVC"/>
    <property type="match status" value="1"/>
</dbReference>
<dbReference type="Pfam" id="PF02075">
    <property type="entry name" value="RuvC"/>
    <property type="match status" value="1"/>
</dbReference>
<dbReference type="PRINTS" id="PR00696">
    <property type="entry name" value="RSOLVASERUVC"/>
</dbReference>
<dbReference type="SUPFAM" id="SSF53098">
    <property type="entry name" value="Ribonuclease H-like"/>
    <property type="match status" value="1"/>
</dbReference>
<dbReference type="PROSITE" id="PS01321">
    <property type="entry name" value="RUVC"/>
    <property type="match status" value="1"/>
</dbReference>
<evidence type="ECO:0000255" key="1">
    <source>
        <dbReference type="HAMAP-Rule" id="MF_00034"/>
    </source>
</evidence>
<sequence>MAIILGIDPGSRVTGYGVIRQVGRQLSYLGSGCIRTKVDDLPSRLKLIYAGVTEIITQFQPDYFAIEQVFMAKNADSALKLGQARGVAIVAATNQSLPVFEYAARQVKQTVVGIGSAEKSQVQHMVRTLLKLPANPQADAADALAIAITHCHISQNVAQVSETRLNLARGRLR</sequence>
<organism>
    <name type="scientific">Klebsiella pneumoniae (strain 342)</name>
    <dbReference type="NCBI Taxonomy" id="507522"/>
    <lineage>
        <taxon>Bacteria</taxon>
        <taxon>Pseudomonadati</taxon>
        <taxon>Pseudomonadota</taxon>
        <taxon>Gammaproteobacteria</taxon>
        <taxon>Enterobacterales</taxon>
        <taxon>Enterobacteriaceae</taxon>
        <taxon>Klebsiella/Raoultella group</taxon>
        <taxon>Klebsiella</taxon>
        <taxon>Klebsiella pneumoniae complex</taxon>
    </lineage>
</organism>